<keyword id="KW-0004">4Fe-4S</keyword>
<keyword id="KW-0997">Cell inner membrane</keyword>
<keyword id="KW-1003">Cell membrane</keyword>
<keyword id="KW-0408">Iron</keyword>
<keyword id="KW-0411">Iron-sulfur</keyword>
<keyword id="KW-0472">Membrane</keyword>
<keyword id="KW-0479">Metal-binding</keyword>
<keyword id="KW-0520">NAD</keyword>
<keyword id="KW-0874">Quinone</keyword>
<keyword id="KW-1278">Translocase</keyword>
<keyword id="KW-0813">Transport</keyword>
<keyword id="KW-0830">Ubiquinone</keyword>
<feature type="chain" id="PRO_0000358398" description="NADH-quinone oxidoreductase subunit B">
    <location>
        <begin position="1"/>
        <end position="160"/>
    </location>
</feature>
<feature type="binding site" evidence="2">
    <location>
        <position position="37"/>
    </location>
    <ligand>
        <name>[4Fe-4S] cluster</name>
        <dbReference type="ChEBI" id="CHEBI:49883"/>
    </ligand>
</feature>
<feature type="binding site" evidence="2">
    <location>
        <position position="38"/>
    </location>
    <ligand>
        <name>[4Fe-4S] cluster</name>
        <dbReference type="ChEBI" id="CHEBI:49883"/>
    </ligand>
</feature>
<feature type="binding site" evidence="2">
    <location>
        <position position="102"/>
    </location>
    <ligand>
        <name>[4Fe-4S] cluster</name>
        <dbReference type="ChEBI" id="CHEBI:49883"/>
    </ligand>
</feature>
<feature type="binding site" evidence="2">
    <location>
        <position position="132"/>
    </location>
    <ligand>
        <name>[4Fe-4S] cluster</name>
        <dbReference type="ChEBI" id="CHEBI:49883"/>
    </ligand>
</feature>
<accession>B3R3W8</accession>
<reference key="1">
    <citation type="journal article" date="2008" name="Genome Res.">
        <title>Genome sequence of the beta-rhizobium Cupriavidus taiwanensis and comparative genomics of rhizobia.</title>
        <authorList>
            <person name="Amadou C."/>
            <person name="Pascal G."/>
            <person name="Mangenot S."/>
            <person name="Glew M."/>
            <person name="Bontemps C."/>
            <person name="Capela D."/>
            <person name="Carrere S."/>
            <person name="Cruveiller S."/>
            <person name="Dossat C."/>
            <person name="Lajus A."/>
            <person name="Marchetti M."/>
            <person name="Poinsot V."/>
            <person name="Rouy Z."/>
            <person name="Servin B."/>
            <person name="Saad M."/>
            <person name="Schenowitz C."/>
            <person name="Barbe V."/>
            <person name="Batut J."/>
            <person name="Medigue C."/>
            <person name="Masson-Boivin C."/>
        </authorList>
    </citation>
    <scope>NUCLEOTIDE SEQUENCE [LARGE SCALE GENOMIC DNA]</scope>
    <source>
        <strain>DSM 17343 / BCRC 17206 / CCUG 44338 / CIP 107171 / LMG 19424 / R1</strain>
    </source>
</reference>
<sequence length="160" mass="17635">MAIEGVLNEGFVTTTADKLINWTRTGSLWPMTFGLACCAVEMMHAGAARYDMDRFGVIFRPSPRQSDVMIVAGTLCNKMAPALRKVYDQMAEPRWVISMGSCANGGGYYHYSYSVVRGCDRIVPVDIYVPGCPPTAEALIYGVIQLQNKIKRTNTIARKG</sequence>
<evidence type="ECO:0000250" key="1"/>
<evidence type="ECO:0000255" key="2">
    <source>
        <dbReference type="HAMAP-Rule" id="MF_01356"/>
    </source>
</evidence>
<dbReference type="EC" id="7.1.1.-" evidence="2"/>
<dbReference type="EMBL" id="CU633749">
    <property type="protein sequence ID" value="CAQ69000.1"/>
    <property type="molecule type" value="Genomic_DNA"/>
</dbReference>
<dbReference type="RefSeq" id="WP_008643342.1">
    <property type="nucleotide sequence ID" value="NC_010528.1"/>
</dbReference>
<dbReference type="SMR" id="B3R3W8"/>
<dbReference type="KEGG" id="cti:RALTA_A1035"/>
<dbReference type="eggNOG" id="COG0377">
    <property type="taxonomic scope" value="Bacteria"/>
</dbReference>
<dbReference type="HOGENOM" id="CLU_055737_7_3_4"/>
<dbReference type="BioCyc" id="CTAI977880:RALTA_RS04920-MONOMER"/>
<dbReference type="Proteomes" id="UP000001692">
    <property type="component" value="Chromosome 1"/>
</dbReference>
<dbReference type="GO" id="GO:0005886">
    <property type="term" value="C:plasma membrane"/>
    <property type="evidence" value="ECO:0007669"/>
    <property type="project" value="UniProtKB-SubCell"/>
</dbReference>
<dbReference type="GO" id="GO:0045271">
    <property type="term" value="C:respiratory chain complex I"/>
    <property type="evidence" value="ECO:0007669"/>
    <property type="project" value="TreeGrafter"/>
</dbReference>
<dbReference type="GO" id="GO:0051539">
    <property type="term" value="F:4 iron, 4 sulfur cluster binding"/>
    <property type="evidence" value="ECO:0007669"/>
    <property type="project" value="UniProtKB-KW"/>
</dbReference>
<dbReference type="GO" id="GO:0005506">
    <property type="term" value="F:iron ion binding"/>
    <property type="evidence" value="ECO:0007669"/>
    <property type="project" value="UniProtKB-UniRule"/>
</dbReference>
<dbReference type="GO" id="GO:0008137">
    <property type="term" value="F:NADH dehydrogenase (ubiquinone) activity"/>
    <property type="evidence" value="ECO:0007669"/>
    <property type="project" value="InterPro"/>
</dbReference>
<dbReference type="GO" id="GO:0050136">
    <property type="term" value="F:NADH:ubiquinone reductase (non-electrogenic) activity"/>
    <property type="evidence" value="ECO:0007669"/>
    <property type="project" value="UniProtKB-UniRule"/>
</dbReference>
<dbReference type="GO" id="GO:0048038">
    <property type="term" value="F:quinone binding"/>
    <property type="evidence" value="ECO:0007669"/>
    <property type="project" value="UniProtKB-KW"/>
</dbReference>
<dbReference type="GO" id="GO:0009060">
    <property type="term" value="P:aerobic respiration"/>
    <property type="evidence" value="ECO:0007669"/>
    <property type="project" value="TreeGrafter"/>
</dbReference>
<dbReference type="GO" id="GO:0015990">
    <property type="term" value="P:electron transport coupled proton transport"/>
    <property type="evidence" value="ECO:0007669"/>
    <property type="project" value="TreeGrafter"/>
</dbReference>
<dbReference type="FunFam" id="3.40.50.12280:FF:000001">
    <property type="entry name" value="NADH-quinone oxidoreductase subunit B 2"/>
    <property type="match status" value="1"/>
</dbReference>
<dbReference type="Gene3D" id="3.40.50.12280">
    <property type="match status" value="1"/>
</dbReference>
<dbReference type="HAMAP" id="MF_01356">
    <property type="entry name" value="NDH1_NuoB"/>
    <property type="match status" value="1"/>
</dbReference>
<dbReference type="InterPro" id="IPR006137">
    <property type="entry name" value="NADH_UbQ_OxRdtase-like_20kDa"/>
</dbReference>
<dbReference type="InterPro" id="IPR006138">
    <property type="entry name" value="NADH_UQ_OxRdtase_20Kd_su"/>
</dbReference>
<dbReference type="NCBIfam" id="TIGR01957">
    <property type="entry name" value="nuoB_fam"/>
    <property type="match status" value="1"/>
</dbReference>
<dbReference type="NCBIfam" id="NF005012">
    <property type="entry name" value="PRK06411.1"/>
    <property type="match status" value="1"/>
</dbReference>
<dbReference type="PANTHER" id="PTHR11995">
    <property type="entry name" value="NADH DEHYDROGENASE"/>
    <property type="match status" value="1"/>
</dbReference>
<dbReference type="PANTHER" id="PTHR11995:SF14">
    <property type="entry name" value="NADH DEHYDROGENASE [UBIQUINONE] IRON-SULFUR PROTEIN 7, MITOCHONDRIAL"/>
    <property type="match status" value="1"/>
</dbReference>
<dbReference type="Pfam" id="PF01058">
    <property type="entry name" value="Oxidored_q6"/>
    <property type="match status" value="1"/>
</dbReference>
<dbReference type="SUPFAM" id="SSF56770">
    <property type="entry name" value="HydA/Nqo6-like"/>
    <property type="match status" value="1"/>
</dbReference>
<dbReference type="PROSITE" id="PS01150">
    <property type="entry name" value="COMPLEX1_20K"/>
    <property type="match status" value="1"/>
</dbReference>
<comment type="function">
    <text evidence="1">NDH-1 shuttles electrons from NADH, via FMN and iron-sulfur (Fe-S) centers, to quinones in the respiratory chain. Couples the redox reaction to proton translocation (for every two electrons transferred, four hydrogen ions are translocated across the cytoplasmic membrane), and thus conserves the redox energy in a proton gradient (By similarity).</text>
</comment>
<comment type="catalytic activity">
    <reaction evidence="2">
        <text>a quinone + NADH + 5 H(+)(in) = a quinol + NAD(+) + 4 H(+)(out)</text>
        <dbReference type="Rhea" id="RHEA:57888"/>
        <dbReference type="ChEBI" id="CHEBI:15378"/>
        <dbReference type="ChEBI" id="CHEBI:24646"/>
        <dbReference type="ChEBI" id="CHEBI:57540"/>
        <dbReference type="ChEBI" id="CHEBI:57945"/>
        <dbReference type="ChEBI" id="CHEBI:132124"/>
    </reaction>
</comment>
<comment type="cofactor">
    <cofactor evidence="2">
        <name>[4Fe-4S] cluster</name>
        <dbReference type="ChEBI" id="CHEBI:49883"/>
    </cofactor>
    <text evidence="2">Binds 1 [4Fe-4S] cluster.</text>
</comment>
<comment type="subunit">
    <text evidence="2">NDH-1 is composed of 14 different subunits. Subunits NuoB, C, D, E, F, and G constitute the peripheral sector of the complex.</text>
</comment>
<comment type="subcellular location">
    <subcellularLocation>
        <location evidence="2">Cell inner membrane</location>
        <topology evidence="2">Peripheral membrane protein</topology>
        <orientation evidence="2">Cytoplasmic side</orientation>
    </subcellularLocation>
</comment>
<comment type="similarity">
    <text evidence="2">Belongs to the complex I 20 kDa subunit family.</text>
</comment>
<gene>
    <name evidence="2" type="primary">nuoB</name>
    <name type="ordered locus">RALTA_A1035</name>
</gene>
<protein>
    <recommendedName>
        <fullName evidence="2">NADH-quinone oxidoreductase subunit B</fullName>
        <ecNumber evidence="2">7.1.1.-</ecNumber>
    </recommendedName>
    <alternativeName>
        <fullName evidence="2">NADH dehydrogenase I subunit B</fullName>
    </alternativeName>
    <alternativeName>
        <fullName evidence="2">NDH-1 subunit B</fullName>
    </alternativeName>
</protein>
<name>NUOB_CUPTR</name>
<organism>
    <name type="scientific">Cupriavidus taiwanensis (strain DSM 17343 / BCRC 17206 / CCUG 44338 / CIP 107171 / LMG 19424 / R1)</name>
    <name type="common">Ralstonia taiwanensis (strain LMG 19424)</name>
    <dbReference type="NCBI Taxonomy" id="977880"/>
    <lineage>
        <taxon>Bacteria</taxon>
        <taxon>Pseudomonadati</taxon>
        <taxon>Pseudomonadota</taxon>
        <taxon>Betaproteobacteria</taxon>
        <taxon>Burkholderiales</taxon>
        <taxon>Burkholderiaceae</taxon>
        <taxon>Cupriavidus</taxon>
    </lineage>
</organism>
<proteinExistence type="inferred from homology"/>